<gene>
    <name evidence="13" type="primary">ADCYAP1R1</name>
</gene>
<evidence type="ECO:0000250" key="1">
    <source>
        <dbReference type="UniProtKB" id="P70205"/>
    </source>
</evidence>
<evidence type="ECO:0000255" key="2"/>
<evidence type="ECO:0000269" key="3">
    <source>
    </source>
</evidence>
<evidence type="ECO:0000269" key="4">
    <source>
    </source>
</evidence>
<evidence type="ECO:0000269" key="5">
    <source>
    </source>
</evidence>
<evidence type="ECO:0000269" key="6">
    <source>
    </source>
</evidence>
<evidence type="ECO:0000269" key="7">
    <source>
    </source>
</evidence>
<evidence type="ECO:0000269" key="8">
    <source>
    </source>
</evidence>
<evidence type="ECO:0000303" key="9">
    <source>
    </source>
</evidence>
<evidence type="ECO:0000303" key="10">
    <source>
    </source>
</evidence>
<evidence type="ECO:0000303" key="11">
    <source>
    </source>
</evidence>
<evidence type="ECO:0000305" key="12"/>
<evidence type="ECO:0000312" key="13">
    <source>
        <dbReference type="HGNC" id="HGNC:242"/>
    </source>
</evidence>
<evidence type="ECO:0000312" key="14">
    <source>
        <dbReference type="PDB" id="6M1H"/>
    </source>
</evidence>
<evidence type="ECO:0000312" key="15">
    <source>
        <dbReference type="PDB" id="7JQD"/>
    </source>
</evidence>
<evidence type="ECO:0007744" key="16">
    <source>
        <dbReference type="PDB" id="2JOD"/>
    </source>
</evidence>
<evidence type="ECO:0007744" key="17">
    <source>
        <dbReference type="PDB" id="3N94"/>
    </source>
</evidence>
<evidence type="ECO:0007744" key="18">
    <source>
        <dbReference type="PDB" id="6M1H"/>
    </source>
</evidence>
<evidence type="ECO:0007744" key="19">
    <source>
        <dbReference type="PDB" id="6M1I"/>
    </source>
</evidence>
<evidence type="ECO:0007744" key="20">
    <source>
        <dbReference type="PDB" id="7JQD"/>
    </source>
</evidence>
<evidence type="ECO:0007744" key="21">
    <source>
        <dbReference type="PDB" id="8E3X"/>
    </source>
</evidence>
<evidence type="ECO:0007829" key="22">
    <source>
        <dbReference type="PDB" id="2JOD"/>
    </source>
</evidence>
<evidence type="ECO:0007829" key="23">
    <source>
        <dbReference type="PDB" id="3N94"/>
    </source>
</evidence>
<evidence type="ECO:0007829" key="24">
    <source>
        <dbReference type="PDB" id="6M1I"/>
    </source>
</evidence>
<evidence type="ECO:0007829" key="25">
    <source>
        <dbReference type="PDB" id="6P9Y"/>
    </source>
</evidence>
<evidence type="ECO:0007829" key="26">
    <source>
        <dbReference type="PDB" id="8E3X"/>
    </source>
</evidence>
<protein>
    <recommendedName>
        <fullName evidence="10">Pituitary adenylate cyclase-activating polypeptide type I receptor</fullName>
        <shortName evidence="10">PAC1 receptor</shortName>
        <shortName evidence="10 11">PAC1R</shortName>
        <shortName>PACAP type I receptor</shortName>
        <shortName>PACAP-R-1</shortName>
        <shortName>PACAP-R1</shortName>
    </recommendedName>
</protein>
<organism>
    <name type="scientific">Homo sapiens</name>
    <name type="common">Human</name>
    <dbReference type="NCBI Taxonomy" id="9606"/>
    <lineage>
        <taxon>Eukaryota</taxon>
        <taxon>Metazoa</taxon>
        <taxon>Chordata</taxon>
        <taxon>Craniata</taxon>
        <taxon>Vertebrata</taxon>
        <taxon>Euteleostomi</taxon>
        <taxon>Mammalia</taxon>
        <taxon>Eutheria</taxon>
        <taxon>Euarchontoglires</taxon>
        <taxon>Primates</taxon>
        <taxon>Haplorrhini</taxon>
        <taxon>Catarrhini</taxon>
        <taxon>Hominidae</taxon>
        <taxon>Homo</taxon>
    </lineage>
</organism>
<reference key="1">
    <citation type="journal article" date="1993" name="Biochem. Biophys. Res. Commun.">
        <title>Molecular cloning and functional expression of a cDNA encoding a human pituitary adenylate cyclase activating polypeptide receptor.</title>
        <authorList>
            <person name="Ogi K."/>
            <person name="Miyamoto Y."/>
            <person name="Masuda Y."/>
            <person name="Habata Y."/>
            <person name="Hosoya M."/>
            <person name="Ohtaki T."/>
            <person name="Masuo Y."/>
            <person name="Onda H."/>
            <person name="Fujino M."/>
        </authorList>
    </citation>
    <scope>NUCLEOTIDE SEQUENCE [MRNA] (ISOFORM N)</scope>
    <source>
        <tissue>Pituitary</tissue>
    </source>
</reference>
<reference key="2">
    <citation type="submission" date="2001-07" db="EMBL/GenBank/DDBJ databases">
        <title>Genome-wide discovery and analysis of human seven transmembrane helix receptor genes.</title>
        <authorList>
            <person name="Suwa M."/>
            <person name="Sato T."/>
            <person name="Okouchi I."/>
            <person name="Arita M."/>
            <person name="Futami K."/>
            <person name="Matsumoto S."/>
            <person name="Tsutsumi S."/>
            <person name="Aburatani H."/>
            <person name="Asai K."/>
            <person name="Akiyama Y."/>
        </authorList>
    </citation>
    <scope>NUCLEOTIDE SEQUENCE [GENOMIC DNA]</scope>
</reference>
<reference key="3">
    <citation type="submission" date="2003-08" db="EMBL/GenBank/DDBJ databases">
        <title>cDNA clones of human proteins involved in signal transduction sequenced by the Guthrie cDNA resource center (www.cdna.org).</title>
        <authorList>
            <person name="King M."/>
            <person name="Aronstam R.S."/>
            <person name="Sharma S.V."/>
        </authorList>
    </citation>
    <scope>NUCLEOTIDE SEQUENCE [LARGE SCALE MRNA] (ISOFORM N)</scope>
    <source>
        <tissue>Brain</tissue>
    </source>
</reference>
<reference key="4">
    <citation type="journal article" date="2004" name="Nat. Genet.">
        <title>Complete sequencing and characterization of 21,243 full-length human cDNAs.</title>
        <authorList>
            <person name="Ota T."/>
            <person name="Suzuki Y."/>
            <person name="Nishikawa T."/>
            <person name="Otsuki T."/>
            <person name="Sugiyama T."/>
            <person name="Irie R."/>
            <person name="Wakamatsu A."/>
            <person name="Hayashi K."/>
            <person name="Sato H."/>
            <person name="Nagai K."/>
            <person name="Kimura K."/>
            <person name="Makita H."/>
            <person name="Sekine M."/>
            <person name="Obayashi M."/>
            <person name="Nishi T."/>
            <person name="Shibahara T."/>
            <person name="Tanaka T."/>
            <person name="Ishii S."/>
            <person name="Yamamoto J."/>
            <person name="Saito K."/>
            <person name="Kawai Y."/>
            <person name="Isono Y."/>
            <person name="Nakamura Y."/>
            <person name="Nagahari K."/>
            <person name="Murakami K."/>
            <person name="Yasuda T."/>
            <person name="Iwayanagi T."/>
            <person name="Wagatsuma M."/>
            <person name="Shiratori A."/>
            <person name="Sudo H."/>
            <person name="Hosoiri T."/>
            <person name="Kaku Y."/>
            <person name="Kodaira H."/>
            <person name="Kondo H."/>
            <person name="Sugawara M."/>
            <person name="Takahashi M."/>
            <person name="Kanda K."/>
            <person name="Yokoi T."/>
            <person name="Furuya T."/>
            <person name="Kikkawa E."/>
            <person name="Omura Y."/>
            <person name="Abe K."/>
            <person name="Kamihara K."/>
            <person name="Katsuta N."/>
            <person name="Sato K."/>
            <person name="Tanikawa M."/>
            <person name="Yamazaki M."/>
            <person name="Ninomiya K."/>
            <person name="Ishibashi T."/>
            <person name="Yamashita H."/>
            <person name="Murakawa K."/>
            <person name="Fujimori K."/>
            <person name="Tanai H."/>
            <person name="Kimata M."/>
            <person name="Watanabe M."/>
            <person name="Hiraoka S."/>
            <person name="Chiba Y."/>
            <person name="Ishida S."/>
            <person name="Ono Y."/>
            <person name="Takiguchi S."/>
            <person name="Watanabe S."/>
            <person name="Yosida M."/>
            <person name="Hotuta T."/>
            <person name="Kusano J."/>
            <person name="Kanehori K."/>
            <person name="Takahashi-Fujii A."/>
            <person name="Hara H."/>
            <person name="Tanase T.-O."/>
            <person name="Nomura Y."/>
            <person name="Togiya S."/>
            <person name="Komai F."/>
            <person name="Hara R."/>
            <person name="Takeuchi K."/>
            <person name="Arita M."/>
            <person name="Imose N."/>
            <person name="Musashino K."/>
            <person name="Yuuki H."/>
            <person name="Oshima A."/>
            <person name="Sasaki N."/>
            <person name="Aotsuka S."/>
            <person name="Yoshikawa Y."/>
            <person name="Matsunawa H."/>
            <person name="Ichihara T."/>
            <person name="Shiohata N."/>
            <person name="Sano S."/>
            <person name="Moriya S."/>
            <person name="Momiyama H."/>
            <person name="Satoh N."/>
            <person name="Takami S."/>
            <person name="Terashima Y."/>
            <person name="Suzuki O."/>
            <person name="Nakagawa S."/>
            <person name="Senoh A."/>
            <person name="Mizoguchi H."/>
            <person name="Goto Y."/>
            <person name="Shimizu F."/>
            <person name="Wakebe H."/>
            <person name="Hishigaki H."/>
            <person name="Watanabe T."/>
            <person name="Sugiyama A."/>
            <person name="Takemoto M."/>
            <person name="Kawakami B."/>
            <person name="Yamazaki M."/>
            <person name="Watanabe K."/>
            <person name="Kumagai A."/>
            <person name="Itakura S."/>
            <person name="Fukuzumi Y."/>
            <person name="Fujimori Y."/>
            <person name="Komiyama M."/>
            <person name="Tashiro H."/>
            <person name="Tanigami A."/>
            <person name="Fujiwara T."/>
            <person name="Ono T."/>
            <person name="Yamada K."/>
            <person name="Fujii Y."/>
            <person name="Ozaki K."/>
            <person name="Hirao M."/>
            <person name="Ohmori Y."/>
            <person name="Kawabata A."/>
            <person name="Hikiji T."/>
            <person name="Kobatake N."/>
            <person name="Inagaki H."/>
            <person name="Ikema Y."/>
            <person name="Okamoto S."/>
            <person name="Okitani R."/>
            <person name="Kawakami T."/>
            <person name="Noguchi S."/>
            <person name="Itoh T."/>
            <person name="Shigeta K."/>
            <person name="Senba T."/>
            <person name="Matsumura K."/>
            <person name="Nakajima Y."/>
            <person name="Mizuno T."/>
            <person name="Morinaga M."/>
            <person name="Sasaki M."/>
            <person name="Togashi T."/>
            <person name="Oyama M."/>
            <person name="Hata H."/>
            <person name="Watanabe M."/>
            <person name="Komatsu T."/>
            <person name="Mizushima-Sugano J."/>
            <person name="Satoh T."/>
            <person name="Shirai Y."/>
            <person name="Takahashi Y."/>
            <person name="Nakagawa K."/>
            <person name="Okumura K."/>
            <person name="Nagase T."/>
            <person name="Nomura N."/>
            <person name="Kikuchi H."/>
            <person name="Masuho Y."/>
            <person name="Yamashita R."/>
            <person name="Nakai K."/>
            <person name="Yada T."/>
            <person name="Nakamura Y."/>
            <person name="Ohara O."/>
            <person name="Isogai T."/>
            <person name="Sugano S."/>
        </authorList>
    </citation>
    <scope>NUCLEOTIDE SEQUENCE [LARGE SCALE MRNA] (ISOFORM N)</scope>
    <source>
        <tissue>Hippocampus</tissue>
    </source>
</reference>
<reference key="5">
    <citation type="journal article" date="2003" name="Nature">
        <title>The DNA sequence of human chromosome 7.</title>
        <authorList>
            <person name="Hillier L.W."/>
            <person name="Fulton R.S."/>
            <person name="Fulton L.A."/>
            <person name="Graves T.A."/>
            <person name="Pepin K.H."/>
            <person name="Wagner-McPherson C."/>
            <person name="Layman D."/>
            <person name="Maas J."/>
            <person name="Jaeger S."/>
            <person name="Walker R."/>
            <person name="Wylie K."/>
            <person name="Sekhon M."/>
            <person name="Becker M.C."/>
            <person name="O'Laughlin M.D."/>
            <person name="Schaller M.E."/>
            <person name="Fewell G.A."/>
            <person name="Delehaunty K.D."/>
            <person name="Miner T.L."/>
            <person name="Nash W.E."/>
            <person name="Cordes M."/>
            <person name="Du H."/>
            <person name="Sun H."/>
            <person name="Edwards J."/>
            <person name="Bradshaw-Cordum H."/>
            <person name="Ali J."/>
            <person name="Andrews S."/>
            <person name="Isak A."/>
            <person name="Vanbrunt A."/>
            <person name="Nguyen C."/>
            <person name="Du F."/>
            <person name="Lamar B."/>
            <person name="Courtney L."/>
            <person name="Kalicki J."/>
            <person name="Ozersky P."/>
            <person name="Bielicki L."/>
            <person name="Scott K."/>
            <person name="Holmes A."/>
            <person name="Harkins R."/>
            <person name="Harris A."/>
            <person name="Strong C.M."/>
            <person name="Hou S."/>
            <person name="Tomlinson C."/>
            <person name="Dauphin-Kohlberg S."/>
            <person name="Kozlowicz-Reilly A."/>
            <person name="Leonard S."/>
            <person name="Rohlfing T."/>
            <person name="Rock S.M."/>
            <person name="Tin-Wollam A.-M."/>
            <person name="Abbott A."/>
            <person name="Minx P."/>
            <person name="Maupin R."/>
            <person name="Strowmatt C."/>
            <person name="Latreille P."/>
            <person name="Miller N."/>
            <person name="Johnson D."/>
            <person name="Murray J."/>
            <person name="Woessner J.P."/>
            <person name="Wendl M.C."/>
            <person name="Yang S.-P."/>
            <person name="Schultz B.R."/>
            <person name="Wallis J.W."/>
            <person name="Spieth J."/>
            <person name="Bieri T.A."/>
            <person name="Nelson J.O."/>
            <person name="Berkowicz N."/>
            <person name="Wohldmann P.E."/>
            <person name="Cook L.L."/>
            <person name="Hickenbotham M.T."/>
            <person name="Eldred J."/>
            <person name="Williams D."/>
            <person name="Bedell J.A."/>
            <person name="Mardis E.R."/>
            <person name="Clifton S.W."/>
            <person name="Chissoe S.L."/>
            <person name="Marra M.A."/>
            <person name="Raymond C."/>
            <person name="Haugen E."/>
            <person name="Gillett W."/>
            <person name="Zhou Y."/>
            <person name="James R."/>
            <person name="Phelps K."/>
            <person name="Iadanoto S."/>
            <person name="Bubb K."/>
            <person name="Simms E."/>
            <person name="Levy R."/>
            <person name="Clendenning J."/>
            <person name="Kaul R."/>
            <person name="Kent W.J."/>
            <person name="Furey T.S."/>
            <person name="Baertsch R.A."/>
            <person name="Brent M.R."/>
            <person name="Keibler E."/>
            <person name="Flicek P."/>
            <person name="Bork P."/>
            <person name="Suyama M."/>
            <person name="Bailey J.A."/>
            <person name="Portnoy M.E."/>
            <person name="Torrents D."/>
            <person name="Chinwalla A.T."/>
            <person name="Gish W.R."/>
            <person name="Eddy S.R."/>
            <person name="McPherson J.D."/>
            <person name="Olson M.V."/>
            <person name="Eichler E.E."/>
            <person name="Green E.D."/>
            <person name="Waterston R.H."/>
            <person name="Wilson R.K."/>
        </authorList>
    </citation>
    <scope>NUCLEOTIDE SEQUENCE [LARGE SCALE GENOMIC DNA]</scope>
</reference>
<reference key="6">
    <citation type="submission" date="2005-07" db="EMBL/GenBank/DDBJ databases">
        <authorList>
            <person name="Mural R.J."/>
            <person name="Istrail S."/>
            <person name="Sutton G.G."/>
            <person name="Florea L."/>
            <person name="Halpern A.L."/>
            <person name="Mobarry C.M."/>
            <person name="Lippert R."/>
            <person name="Walenz B."/>
            <person name="Shatkay H."/>
            <person name="Dew I."/>
            <person name="Miller J.R."/>
            <person name="Flanigan M.J."/>
            <person name="Edwards N.J."/>
            <person name="Bolanos R."/>
            <person name="Fasulo D."/>
            <person name="Halldorsson B.V."/>
            <person name="Hannenhalli S."/>
            <person name="Turner R."/>
            <person name="Yooseph S."/>
            <person name="Lu F."/>
            <person name="Nusskern D.R."/>
            <person name="Shue B.C."/>
            <person name="Zheng X.H."/>
            <person name="Zhong F."/>
            <person name="Delcher A.L."/>
            <person name="Huson D.H."/>
            <person name="Kravitz S.A."/>
            <person name="Mouchard L."/>
            <person name="Reinert K."/>
            <person name="Remington K.A."/>
            <person name="Clark A.G."/>
            <person name="Waterman M.S."/>
            <person name="Eichler E.E."/>
            <person name="Adams M.D."/>
            <person name="Hunkapiller M.W."/>
            <person name="Myers E.W."/>
            <person name="Venter J.C."/>
        </authorList>
    </citation>
    <scope>NUCLEOTIDE SEQUENCE [LARGE SCALE GENOMIC DNA]</scope>
</reference>
<reference key="7">
    <citation type="journal article" date="2004" name="Genome Res.">
        <title>The status, quality, and expansion of the NIH full-length cDNA project: the Mammalian Gene Collection (MGC).</title>
        <authorList>
            <consortium name="The MGC Project Team"/>
        </authorList>
    </citation>
    <scope>NUCLEOTIDE SEQUENCE [LARGE SCALE MRNA] (ISOFORM N-HOP1)</scope>
    <source>
        <tissue>Brain</tissue>
        <tissue>Testis</tissue>
    </source>
</reference>
<reference key="8">
    <citation type="journal article" date="1994" name="Genomics">
        <title>Human type I pituitary adenylate cyclase activating polypeptide receptor (ADCYAP1R): localization to chromosome band 7p14 and integration into the cytogenetic, physical and genetic map of chromosome 7.</title>
        <authorList>
            <person name="Stoffel M."/>
            <person name="Espinosa R."/>
            <person name="Trabb J.B."/>
            <person name="le Beau M.M."/>
            <person name="Bell G.I."/>
        </authorList>
    </citation>
    <scope>NUCLEOTIDE SEQUENCE [GENOMIC DNA] OF 418-468</scope>
    <source>
        <tissue>Placenta</tissue>
    </source>
</reference>
<reference key="9">
    <citation type="journal article" date="1999" name="J. Neuroendocrinol.">
        <title>N-terminal splice variants of the type I PACAP receptor: isolation, characterization and ligand binding/selectivity determinants.</title>
        <authorList>
            <person name="Dautzenberg F.M."/>
            <person name="Mevenkamp G."/>
            <person name="Wille S."/>
            <person name="Hauger R.L."/>
        </authorList>
    </citation>
    <scope>ALTERNATIVE SPLICING</scope>
</reference>
<reference key="10">
    <citation type="journal article" date="2022" name="Nat. Commun.">
        <title>A distinctive ligand recognition mechanism by the human vasoactive intestinal polypeptide receptor 2.</title>
        <authorList>
            <person name="Xu Y."/>
            <person name="Feng W."/>
            <person name="Zhou Q."/>
            <person name="Liang A."/>
            <person name="Li J."/>
            <person name="Dai A."/>
            <person name="Zhao F."/>
            <person name="Yan J."/>
            <person name="Chen C.W."/>
            <person name="Li H."/>
            <person name="Zhao L.H."/>
            <person name="Xia T."/>
            <person name="Jiang Y."/>
            <person name="Xu H.E."/>
            <person name="Yang D."/>
            <person name="Wang M.W."/>
        </authorList>
    </citation>
    <scope>FUNCTION</scope>
    <scope>MUTAGENESIS OF TYR-150</scope>
</reference>
<reference evidence="16" key="11">
    <citation type="journal article" date="2007" name="Proc. Natl. Acad. Sci. U.S.A.">
        <title>Solution structure and mutational analysis of pituitary adenylate cyclase-activating polypeptide binding to the extracellular domain of PAC1-RS.</title>
        <authorList>
            <person name="Sun C."/>
            <person name="Song D."/>
            <person name="Davis-Taber R.A."/>
            <person name="Barrett L.W."/>
            <person name="Scott V.E."/>
            <person name="Richardson P.L."/>
            <person name="Pereda-Lopez A."/>
            <person name="Uchic M.E."/>
            <person name="Solomon L.R."/>
            <person name="Lake M.R."/>
            <person name="Walter K.A."/>
            <person name="Hajduk P.J."/>
            <person name="Olejniczak E.T."/>
        </authorList>
    </citation>
    <scope>STRUCTURE BY NMR OF 22-143 IN COMPLEX WITH ADCYAP1</scope>
    <scope>MUTAGENESIS OF VAL-114; GLU-125; PRO-128; GLU-138 AND TYR-139</scope>
    <scope>DISULFIDE BONDS</scope>
</reference>
<reference evidence="17" key="12">
    <citation type="journal article" date="2011" name="PLoS ONE">
        <title>Crystal structure of the PAC1R extracellular domain unifies a consensus fold for hormone recognition by class B G-protein coupled receptors.</title>
        <authorList>
            <person name="Kumar S."/>
            <person name="Pioszak A."/>
            <person name="Zhang C."/>
            <person name="Swaminathan K."/>
            <person name="Xu H.E."/>
        </authorList>
    </citation>
    <scope>X-RAY CRYSTALLOGRAPHY (1.8 ANGSTROMS) OF 26-140</scope>
    <scope>MUTAGENESIS OF GLU-125</scope>
    <scope>DISULFIDE BONDS</scope>
</reference>
<reference evidence="14 19" key="13">
    <citation type="journal article" date="2020" name="Cell Res.">
        <title>Cryo-EM structures of PAC1 receptor reveal ligand binding mechanism.</title>
        <authorList>
            <person name="Wang J."/>
            <person name="Song X."/>
            <person name="Zhang D."/>
            <person name="Chen X."/>
            <person name="Li X."/>
            <person name="Sun Y."/>
            <person name="Li C."/>
            <person name="Song Y."/>
            <person name="Ding Y."/>
            <person name="Ren R."/>
            <person name="Harrington E.H."/>
            <person name="Hu L.A."/>
            <person name="Zhong W."/>
            <person name="Xu C."/>
            <person name="Huang X."/>
            <person name="Wang H.W."/>
            <person name="Ma Y."/>
        </authorList>
    </citation>
    <scope>STRUCTURE BY ELECTRON MICROSCOPY (3.6 ANGSTROMS) OF 23-438 MUTANT LEU-163; LEU-167; LEU-169; LEU-170; ALA-276; LEU-278 AND PHE-280 IN COMPLEX WITH ADCYAP1/PACAP-38 AND SAND FLY MAXADILAN</scope>
    <scope>FUNCTION</scope>
    <scope>INTERACTION WITH SAND FLY MAXADILAN</scope>
    <scope>MUTAGENESIS OF TYR-130; PHE-131; TYR-157; TYR-161; ARG-199; LYS-206; ASP-207; MET-299; ASP-301; TRP-306; ARG-381; LEU-382 AND GLU-385</scope>
</reference>
<reference evidence="15" key="14">
    <citation type="journal article" date="2021" name="J. Med. Chem.">
        <title>Discovery of Selective Pituitary Adenylate Cyclase 1 Receptor (PAC1R) Antagonist Peptides Potent in a Maxadilan/PACAP38-Induced Increase in Blood Flow Pharmacodynamic Model.</title>
        <authorList>
            <person name="Hu E."/>
            <person name="Hong F.T."/>
            <person name="Aral J."/>
            <person name="Long J."/>
            <person name="Piper D.E."/>
            <person name="Poppe L."/>
            <person name="Andrews K.L."/>
            <person name="Hager T."/>
            <person name="Davis C."/>
            <person name="Li H."/>
            <person name="Wong P."/>
            <person name="Gavva N."/>
            <person name="Shi L."/>
            <person name="Zhu D.X.D."/>
            <person name="Lehto S.G."/>
            <person name="Xu C."/>
            <person name="Miranda L.P."/>
        </authorList>
    </citation>
    <scope>X-RAY CRYSTALLOGRAPHY (2.70 ANGSTROMS) OF 18-143 IN COMPLEX WITH PEPTIDE ANTAGONIST</scope>
    <scope>FUNCTION</scope>
    <scope>ACTIVITY REGULATION</scope>
</reference>
<reference evidence="21" key="15">
    <citation type="journal article" date="2022" name="Nat. Commun.">
        <title>Understanding VPAC receptor family peptide binding and selectivity.</title>
        <authorList>
            <person name="Piper S.J."/>
            <person name="Deganutti G."/>
            <person name="Lu J."/>
            <person name="Zhao P."/>
            <person name="Liang Y.L."/>
            <person name="Lu Y."/>
            <person name="Fletcher M.M."/>
            <person name="Hossain M.A."/>
            <person name="Christopoulos A."/>
            <person name="Reynolds C.A."/>
            <person name="Danev R."/>
            <person name="Sexton P.M."/>
            <person name="Wootten D."/>
        </authorList>
    </citation>
    <scope>STRUCTURE BY ELECTRON MICROSCOPY (2.3 ANGSTROMS) OF 19-468 IN COMPLEX WITH ADCYAP1 AND G PROTEINS</scope>
    <scope>FUNCTION</scope>
    <scope>SUBCELLULAR LOCATION</scope>
</reference>
<proteinExistence type="evidence at protein level"/>
<comment type="function">
    <text evidence="5 6 7 8">G protein-coupled receptor activated by the neuropeptide pituitary adenylate cyclase-activating polypeptide (ADCYAP1/PACAP) (PubMed:32047270, PubMed:33715378, PubMed:35477937, PubMed:36385145). Binds both PACAP27 and PACAP38 bioactive peptides (PubMed:32047270, PubMed:35477937, PubMed:36385145). Ligand binding causes a conformation change that triggers signaling via guanine nucleotide-binding proteins (G proteins) and modulates the activity of downstream effectors. Activates cAMP-dependent pathway (PubMed:32047270, PubMed:33715378, PubMed:35477937, PubMed:36385145). May regulate the release of adrenocorticotropin, luteinizing hormone, growth hormone, prolactin, epinephrine, and catecholamine. May play a role in spermatogenesis and sperm motility. Causes smooth muscle relaxation and secretion in the gastrointestinal tract (PubMed:32047270, PubMed:33715378).</text>
</comment>
<comment type="activity regulation">
    <text evidence="6">Several synthetic peptides derived from maxadilan, a vasodilator peptide from Lutzomyia longipalpis saliva, act as antagonists for ADCYAP1R1.</text>
</comment>
<comment type="subunit">
    <text evidence="3 5 8">Interacts with maxadilan, a vasodilator peptide from Lutzomyia longipalpis saliva; the interaction results in ADCYAP1R1 activation (PubMed:32047270).</text>
</comment>
<comment type="interaction">
    <interactant intactId="EBI-17241711">
        <id>P41586-2</id>
    </interactant>
    <interactant intactId="EBI-77613">
        <id>P05067</id>
        <label>APP</label>
    </interactant>
    <organismsDiffer>false</organismsDiffer>
    <experiments>3</experiments>
</comment>
<comment type="interaction">
    <interactant intactId="EBI-17241711">
        <id>P41586-2</id>
    </interactant>
    <interactant intactId="EBI-12837904">
        <id>Q96MV8</id>
        <label>ZDHHC15</label>
    </interactant>
    <organismsDiffer>false</organismsDiffer>
    <experiments>3</experiments>
</comment>
<comment type="interaction">
    <interactant intactId="EBI-15635217">
        <id>P41586-3</id>
    </interactant>
    <interactant intactId="EBI-8588930">
        <id>P18509</id>
        <label>ADCYAP1</label>
    </interactant>
    <organismsDiffer>false</organismsDiffer>
    <experiments>2</experiments>
</comment>
<comment type="subcellular location">
    <subcellularLocation>
        <location>Cell membrane</location>
        <topology evidence="8">Multi-pass membrane protein</topology>
    </subcellularLocation>
</comment>
<comment type="alternative products">
    <event type="alternative splicing"/>
    <isoform>
        <id>P41586-1</id>
        <name>N</name>
        <sequence type="displayed"/>
    </isoform>
    <isoform>
        <id>P41586-2</id>
        <name>N-HOP1</name>
        <sequence type="described" ref="VSP_042671"/>
    </isoform>
    <isoform>
        <id>P41586-3</id>
        <name>S</name>
        <sequence type="described" ref="VSP_042670"/>
    </isoform>
    <isoform>
        <id>P41586-4</id>
        <name>S-HOP1</name>
        <sequence type="described" ref="VSP_042670 VSP_042671"/>
    </isoform>
    <isoform>
        <id>P41586-5</id>
        <name>VS</name>
        <sequence type="described" ref="VSP_042669 VSP_042670"/>
    </isoform>
</comment>
<comment type="tissue specificity">
    <text>Most abundant in the brain, low expression in the lung, liver, thymus, spleen, pancreas and placenta.</text>
</comment>
<comment type="similarity">
    <text evidence="12">Belongs to the G-protein coupled receptor 2 family.</text>
</comment>
<comment type="sequence caution" evidence="12">
    <conflict type="erroneous initiation">
        <sequence resource="EMBL-CDS" id="BAA04466"/>
    </conflict>
</comment>
<keyword id="KW-0002">3D-structure</keyword>
<keyword id="KW-0025">Alternative splicing</keyword>
<keyword id="KW-1003">Cell membrane</keyword>
<keyword id="KW-0217">Developmental protein</keyword>
<keyword id="KW-0221">Differentiation</keyword>
<keyword id="KW-1015">Disulfide bond</keyword>
<keyword id="KW-0297">G-protein coupled receptor</keyword>
<keyword id="KW-0325">Glycoprotein</keyword>
<keyword id="KW-0472">Membrane</keyword>
<keyword id="KW-0597">Phosphoprotein</keyword>
<keyword id="KW-1267">Proteomics identification</keyword>
<keyword id="KW-0675">Receptor</keyword>
<keyword id="KW-1185">Reference proteome</keyword>
<keyword id="KW-0732">Signal</keyword>
<keyword id="KW-0744">Spermatogenesis</keyword>
<keyword id="KW-0807">Transducer</keyword>
<keyword id="KW-0812">Transmembrane</keyword>
<keyword id="KW-1133">Transmembrane helix</keyword>
<sequence length="468" mass="53314">MAGVVHVSLAALLLLPMAPAMHSDCIFKKEQAMCLEKIQRANELMGFNDSSPGCPGMWDNITCWKPAHVGEMVLVSCPELFRIFNPDQVWETETIGESDFGDSNSLDLSDMGVVSRNCTEDGWSEPFPHYFDACGFDEYESETGDQDYYYLSVKALYTVGYSTSLVTLTTAMVILCRFRKLHCTRNFIHMNLFVSFMLRAISVFIKDWILYAEQDSNHCFISTVECKAVMVFFHYCVVSNYFWLFIEGLYLFTLLVETFFPERRYFYWYTIIGWGTPTVCVTVWATLRLYFDDTGCWDMNDSTALWWVIKGPVVGSIMVNFVLFIGIIVILVQKLQSPDMGGNESSIYLRLARSTLLLIPLFGIHYTVFAFSPENVSKRERLVFELGLGSFQGFVVAVLYCFLNGEVQAEIKRKWRSWKVNRYFAVDFKHRHPSLASSGVNGGTQLSILSKSSSQIRMSGLPADNLAT</sequence>
<feature type="signal peptide" evidence="2">
    <location>
        <begin position="1"/>
        <end position="20"/>
    </location>
</feature>
<feature type="chain" id="PRO_0000012841" description="Pituitary adenylate cyclase-activating polypeptide type I receptor">
    <location>
        <begin position="21"/>
        <end position="468"/>
    </location>
</feature>
<feature type="topological domain" description="Extracellular" evidence="12">
    <location>
        <begin position="21"/>
        <end position="152"/>
    </location>
</feature>
<feature type="transmembrane region" description="Helical; Name=1" evidence="8 21">
    <location>
        <begin position="153"/>
        <end position="177"/>
    </location>
</feature>
<feature type="topological domain" description="Cytoplasmic" evidence="12">
    <location>
        <begin position="178"/>
        <end position="187"/>
    </location>
</feature>
<feature type="transmembrane region" description="Helical; Name=2" evidence="8 21">
    <location>
        <begin position="188"/>
        <end position="208"/>
    </location>
</feature>
<feature type="topological domain" description="Extracellular" evidence="12">
    <location>
        <begin position="209"/>
        <end position="223"/>
    </location>
</feature>
<feature type="transmembrane region" description="Helical; Name=3" evidence="8 21">
    <location>
        <begin position="224"/>
        <end position="249"/>
    </location>
</feature>
<feature type="topological domain" description="Cytoplasmic" evidence="12">
    <location>
        <begin position="250"/>
        <end position="267"/>
    </location>
</feature>
<feature type="transmembrane region" description="Helical; Name=4" evidence="8 21">
    <location>
        <begin position="268"/>
        <end position="290"/>
    </location>
</feature>
<feature type="topological domain" description="Extracellular" evidence="12">
    <location>
        <begin position="291"/>
        <end position="302"/>
    </location>
</feature>
<feature type="transmembrane region" description="Helical; Name=5" evidence="8 21">
    <location>
        <begin position="303"/>
        <end position="329"/>
    </location>
</feature>
<feature type="topological domain" description="Cytoplasmic" evidence="12">
    <location>
        <begin position="330"/>
        <end position="347"/>
    </location>
</feature>
<feature type="transmembrane region" description="Helical; Name=6" evidence="8 21">
    <location>
        <begin position="348"/>
        <end position="374"/>
    </location>
</feature>
<feature type="topological domain" description="Extracellular" evidence="12">
    <location>
        <begin position="375"/>
        <end position="379"/>
    </location>
</feature>
<feature type="transmembrane region" description="Helical; Name=7" evidence="5 19">
    <location>
        <begin position="380"/>
        <end position="403"/>
    </location>
</feature>
<feature type="topological domain" description="Cytoplasmic" evidence="12">
    <location>
        <begin position="404"/>
        <end position="468"/>
    </location>
</feature>
<feature type="region of interest" description="Important for ADCYAP1/PACAP ligand binding and specificity" evidence="3 4">
    <location>
        <begin position="125"/>
        <end position="139"/>
    </location>
</feature>
<feature type="modified residue" description="Phosphoserine" evidence="1">
    <location>
        <position position="434"/>
    </location>
</feature>
<feature type="modified residue" description="Phosphoserine" evidence="1">
    <location>
        <position position="447"/>
    </location>
</feature>
<feature type="glycosylation site" description="N-linked (GlcNAc...) asparagine" evidence="2">
    <location>
        <position position="48"/>
    </location>
</feature>
<feature type="glycosylation site" description="N-linked (GlcNAc...) asparagine" evidence="2">
    <location>
        <position position="60"/>
    </location>
</feature>
<feature type="glycosylation site" description="N-linked (GlcNAc...) asparagine" evidence="2">
    <location>
        <position position="117"/>
    </location>
</feature>
<feature type="glycosylation site" description="N-linked (GlcNAc...) asparagine" evidence="2">
    <location>
        <position position="300"/>
    </location>
</feature>
<feature type="glycosylation site" description="N-linked (GlcNAc...) asparagine" evidence="2">
    <location>
        <position position="375"/>
    </location>
</feature>
<feature type="disulfide bond" evidence="3 4 5 6 8 16 17 19 20 21">
    <location>
        <begin position="34"/>
        <end position="63"/>
    </location>
</feature>
<feature type="disulfide bond" evidence="3 4 5 6 8 16 17 18 19 20 21">
    <location>
        <begin position="54"/>
        <end position="118"/>
    </location>
</feature>
<feature type="disulfide bond" evidence="3 4 5 6 8 16 17 18 20 21">
    <location>
        <begin position="77"/>
        <end position="134"/>
    </location>
</feature>
<feature type="disulfide bond" evidence="5 8 18 19 21">
    <location>
        <begin position="226"/>
        <end position="296"/>
    </location>
</feature>
<feature type="splice variant" id="VSP_042669" description="In isoform VS." evidence="12">
    <location>
        <begin position="53"/>
        <end position="88"/>
    </location>
</feature>
<feature type="splice variant" id="VSP_042670" description="In isoform S, isoform S-HOP1 and isoform VS." evidence="12">
    <location>
        <begin position="89"/>
        <end position="109"/>
    </location>
</feature>
<feature type="splice variant" id="VSP_042671" description="In isoform N-HOP1 and isoform S-HOP1." evidence="9">
    <original>Y</original>
    <variation>YFSCVQKCYCKPQRAQQHSCKMSELSTIT</variation>
    <location>
        <position position="348"/>
    </location>
</feature>
<feature type="mutagenesis site" description="Reduced affinity for ADCYAP1." evidence="3">
    <original>V</original>
    <variation>A</variation>
    <location>
        <position position="114"/>
    </location>
</feature>
<feature type="mutagenesis site" description="Reduced affinity for ADCYAP1." evidence="3 4">
    <original>E</original>
    <variation>R</variation>
    <location>
        <position position="125"/>
    </location>
</feature>
<feature type="mutagenesis site" description="Reduced affinity for ADCYAP1." evidence="3">
    <original>P</original>
    <variation>A</variation>
    <location>
        <position position="128"/>
    </location>
</feature>
<feature type="mutagenesis site" description="Decreases maxadilan-induced receptor activity in the functional cAMP assay. Does not affect PACAP-38-induced receptor activity." evidence="5">
    <original>Y</original>
    <variation>A</variation>
    <location>
        <position position="130"/>
    </location>
</feature>
<feature type="mutagenesis site" description="Decreases maxadilan-induced receptor activity in the functional cAMP assay. Does not affect PACAP-38-induced receptor activity." evidence="5">
    <original>F</original>
    <variation>A</variation>
    <location>
        <position position="131"/>
    </location>
</feature>
<feature type="mutagenesis site" description="Reduced affinity for ADCYAP1." evidence="3">
    <original>E</original>
    <variation>R</variation>
    <location>
        <position position="138"/>
    </location>
</feature>
<feature type="mutagenesis site" description="Strongly reduced affinity for ADCYAP1." evidence="3">
    <original>Y</original>
    <variation>A</variation>
    <location>
        <position position="139"/>
    </location>
</feature>
<feature type="mutagenesis site" description="Decreased ADCYAP1/PACAP27 potency for ADCYAP1R1." evidence="7">
    <original>Y</original>
    <variation>A</variation>
    <location>
        <position position="150"/>
    </location>
</feature>
<feature type="mutagenesis site" description="Decreases maxadilan-induced receptor activity in the functional cAMP assay. Does not affect PACAP-38-induced receptor activity." evidence="5">
    <original>Y</original>
    <variation>A</variation>
    <location>
        <position position="157"/>
    </location>
</feature>
<feature type="mutagenesis site" description="Decreases PACAP-38-induced receptor activity in the functional cAMP assay. Decreases maxadilan-induced receptor activity." evidence="5">
    <original>Y</original>
    <variation>A</variation>
    <location>
        <position position="161"/>
    </location>
</feature>
<feature type="mutagenesis site" description="Decreases PACAP-38-induced receptor activity in the functional cAMP assay. Slightly decreases maxadilan-induced receptor activity." evidence="5">
    <original>R</original>
    <variation>A</variation>
    <location>
        <position position="199"/>
    </location>
</feature>
<feature type="mutagenesis site" description="Decreases PACAP-38-induced receptor activity in the functional cAMP assay. Decreases maxadilan-induced receptor activity." evidence="5">
    <original>K</original>
    <variation>A</variation>
    <location>
        <position position="206"/>
    </location>
</feature>
<feature type="mutagenesis site" description="Decreases PACAP-38-induced receptor activity in the functional cAMP assay. Decreases maxadilan-induced receptor activity." evidence="5">
    <original>D</original>
    <variation>A</variation>
    <location>
        <position position="207"/>
    </location>
</feature>
<feature type="mutagenesis site" description="Decreases maxadilan-induced receptor activity in the functional cAMP assay. Does not affect PACAP-38-induced receptor activity." evidence="5">
    <original>M</original>
    <variation>A</variation>
    <location>
        <position position="299"/>
    </location>
</feature>
<feature type="mutagenesis site" description="Decreases maxadilan-induced receptor activity in the functional cAMP assay. Does not affect PACAP-38-induced receptor activity." evidence="5">
    <original>D</original>
    <variation>A</variation>
    <location>
        <position position="301"/>
    </location>
</feature>
<feature type="mutagenesis site" description="Decreases PACAP-38-induced receptor activity in the functional cAMP assay. Decreases maxadilan-induced receptor activity." evidence="5">
    <original>W</original>
    <variation>A</variation>
    <location>
        <position position="306"/>
    </location>
</feature>
<feature type="mutagenesis site" description="Decreases PACAP-38-induced receptor activity in the functional cAMP assay. Decreases maxadilan-induced receptor activity." evidence="5">
    <original>R</original>
    <variation>A</variation>
    <location>
        <position position="381"/>
    </location>
</feature>
<feature type="mutagenesis site" description="Decreases maxadilan-induced receptor activity in the functional cAMP assay. Does not affect PACAP-38-induced receptor activity." evidence="5">
    <original>L</original>
    <variation>A</variation>
    <location>
        <position position="382"/>
    </location>
</feature>
<feature type="mutagenesis site" description="Decreases maxadilan-induced receptor activity in the functional cAMP assay. Does not affect PACAP-38-induced receptor activity." evidence="5">
    <original>E</original>
    <variation>A</variation>
    <location>
        <position position="385"/>
    </location>
</feature>
<feature type="helix" evidence="23">
    <location>
        <begin position="26"/>
        <end position="47"/>
    </location>
</feature>
<feature type="turn" evidence="22">
    <location>
        <begin position="48"/>
        <end position="50"/>
    </location>
</feature>
<feature type="strand" evidence="26">
    <location>
        <begin position="60"/>
        <end position="62"/>
    </location>
</feature>
<feature type="strand" evidence="23">
    <location>
        <begin position="72"/>
        <end position="76"/>
    </location>
</feature>
<feature type="helix" evidence="23">
    <location>
        <begin position="79"/>
        <end position="83"/>
    </location>
</feature>
<feature type="strand" evidence="23">
    <location>
        <begin position="113"/>
        <end position="119"/>
    </location>
</feature>
<feature type="strand" evidence="24">
    <location>
        <begin position="123"/>
        <end position="128"/>
    </location>
</feature>
<feature type="helix" evidence="23">
    <location>
        <begin position="130"/>
        <end position="134"/>
    </location>
</feature>
<feature type="helix" evidence="26">
    <location>
        <begin position="147"/>
        <end position="176"/>
    </location>
</feature>
<feature type="strand" evidence="24">
    <location>
        <begin position="178"/>
        <end position="180"/>
    </location>
</feature>
<feature type="helix" evidence="26">
    <location>
        <begin position="184"/>
        <end position="210"/>
    </location>
</feature>
<feature type="helix" evidence="26">
    <location>
        <begin position="212"/>
        <end position="217"/>
    </location>
</feature>
<feature type="helix" evidence="26">
    <location>
        <begin position="224"/>
        <end position="256"/>
    </location>
</feature>
<feature type="helix" evidence="26">
    <location>
        <begin position="264"/>
        <end position="290"/>
    </location>
</feature>
<feature type="strand" evidence="24">
    <location>
        <begin position="294"/>
        <end position="299"/>
    </location>
</feature>
<feature type="helix" evidence="26">
    <location>
        <begin position="303"/>
        <end position="335"/>
    </location>
</feature>
<feature type="turn" evidence="26">
    <location>
        <begin position="338"/>
        <end position="340"/>
    </location>
</feature>
<feature type="strand" evidence="26">
    <location>
        <begin position="343"/>
        <end position="345"/>
    </location>
</feature>
<feature type="helix" evidence="26">
    <location>
        <begin position="347"/>
        <end position="362"/>
    </location>
</feature>
<feature type="helix" evidence="26">
    <location>
        <begin position="364"/>
        <end position="366"/>
    </location>
</feature>
<feature type="helix" evidence="26">
    <location>
        <begin position="367"/>
        <end position="370"/>
    </location>
</feature>
<feature type="turn" evidence="25">
    <location>
        <begin position="374"/>
        <end position="376"/>
    </location>
</feature>
<feature type="helix" evidence="26">
    <location>
        <begin position="378"/>
        <end position="385"/>
    </location>
</feature>
<feature type="turn" evidence="26">
    <location>
        <begin position="386"/>
        <end position="388"/>
    </location>
</feature>
<feature type="helix" evidence="26">
    <location>
        <begin position="389"/>
        <end position="391"/>
    </location>
</feature>
<feature type="helix" evidence="26">
    <location>
        <begin position="392"/>
        <end position="400"/>
    </location>
</feature>
<feature type="helix" evidence="26">
    <location>
        <begin position="405"/>
        <end position="416"/>
    </location>
</feature>
<feature type="sequence conflict" description="In Ref. 7; AAI43680." evidence="12" ref="7">
    <location sequence="P41586-2">
        <position position="350"/>
    </location>
</feature>
<dbReference type="EMBL" id="D17516">
    <property type="protein sequence ID" value="BAA04466.1"/>
    <property type="status" value="ALT_INIT"/>
    <property type="molecule type" value="mRNA"/>
</dbReference>
<dbReference type="EMBL" id="AB065700">
    <property type="protein sequence ID" value="BAC05923.1"/>
    <property type="molecule type" value="Genomic_DNA"/>
</dbReference>
<dbReference type="EMBL" id="AY366498">
    <property type="protein sequence ID" value="AAQ72806.1"/>
    <property type="molecule type" value="mRNA"/>
</dbReference>
<dbReference type="EMBL" id="AK290046">
    <property type="protein sequence ID" value="BAF82735.1"/>
    <property type="molecule type" value="mRNA"/>
</dbReference>
<dbReference type="EMBL" id="AC006466">
    <property type="status" value="NOT_ANNOTATED_CDS"/>
    <property type="molecule type" value="Genomic_DNA"/>
</dbReference>
<dbReference type="EMBL" id="BC117116">
    <property type="protein sequence ID" value="AAI17117.1"/>
    <property type="molecule type" value="mRNA"/>
</dbReference>
<dbReference type="EMBL" id="BC136267">
    <property type="protein sequence ID" value="AAI36268.1"/>
    <property type="molecule type" value="mRNA"/>
</dbReference>
<dbReference type="EMBL" id="BC143679">
    <property type="protein sequence ID" value="AAI43680.1"/>
    <property type="molecule type" value="mRNA"/>
</dbReference>
<dbReference type="EMBL" id="CH471073">
    <property type="protein sequence ID" value="EAW93978.1"/>
    <property type="molecule type" value="Genomic_DNA"/>
</dbReference>
<dbReference type="EMBL" id="U09216">
    <property type="protein sequence ID" value="AAA19323.1"/>
    <property type="molecule type" value="Genomic_DNA"/>
</dbReference>
<dbReference type="CCDS" id="CCDS5433.1">
    <molecule id="P41586-1"/>
</dbReference>
<dbReference type="CCDS" id="CCDS56480.1">
    <molecule id="P41586-2"/>
</dbReference>
<dbReference type="CCDS" id="CCDS56481.1">
    <molecule id="P41586-3"/>
</dbReference>
<dbReference type="PIR" id="JN0902">
    <property type="entry name" value="JN0902"/>
</dbReference>
<dbReference type="RefSeq" id="NP_001109.2">
    <molecule id="P41586-1"/>
    <property type="nucleotide sequence ID" value="NM_001118.4"/>
</dbReference>
<dbReference type="RefSeq" id="NP_001186564.1">
    <molecule id="P41586-2"/>
    <property type="nucleotide sequence ID" value="NM_001199635.2"/>
</dbReference>
<dbReference type="RefSeq" id="NP_001186565.1">
    <property type="nucleotide sequence ID" value="NM_001199636.1"/>
</dbReference>
<dbReference type="RefSeq" id="NP_001186566.1">
    <molecule id="P41586-3"/>
    <property type="nucleotide sequence ID" value="NM_001199637.2"/>
</dbReference>
<dbReference type="RefSeq" id="XP_005249675.1">
    <molecule id="P41586-5"/>
    <property type="nucleotide sequence ID" value="XM_005249618.6"/>
</dbReference>
<dbReference type="RefSeq" id="XP_016867226.1">
    <molecule id="P41586-4"/>
    <property type="nucleotide sequence ID" value="XM_017011737.3"/>
</dbReference>
<dbReference type="RefSeq" id="XP_054213197.1">
    <molecule id="P41586-4"/>
    <property type="nucleotide sequence ID" value="XM_054357222.1"/>
</dbReference>
<dbReference type="RefSeq" id="XP_054213200.1">
    <molecule id="P41586-5"/>
    <property type="nucleotide sequence ID" value="XM_054357225.1"/>
</dbReference>
<dbReference type="PDB" id="2JOD">
    <property type="method" value="NMR"/>
    <property type="chains" value="A=22-143"/>
</dbReference>
<dbReference type="PDB" id="3N94">
    <property type="method" value="X-ray"/>
    <property type="resolution" value="1.80 A"/>
    <property type="chains" value="A=26-140"/>
</dbReference>
<dbReference type="PDB" id="6LPB">
    <property type="method" value="EM"/>
    <property type="resolution" value="3.90 A"/>
    <property type="chains" value="R=21-417"/>
</dbReference>
<dbReference type="PDB" id="6M1H">
    <property type="method" value="EM"/>
    <property type="resolution" value="3.60 A"/>
    <property type="chains" value="A=23-438"/>
</dbReference>
<dbReference type="PDB" id="6M1I">
    <property type="method" value="EM"/>
    <property type="resolution" value="3.50 A"/>
    <property type="chains" value="A=23-438"/>
</dbReference>
<dbReference type="PDB" id="6P9Y">
    <property type="method" value="EM"/>
    <property type="resolution" value="3.01 A"/>
    <property type="chains" value="R=19-468"/>
</dbReference>
<dbReference type="PDB" id="7JQD">
    <property type="method" value="X-ray"/>
    <property type="resolution" value="2.70 A"/>
    <property type="chains" value="A=18-143"/>
</dbReference>
<dbReference type="PDB" id="8E3X">
    <property type="method" value="EM"/>
    <property type="resolution" value="2.30 A"/>
    <property type="chains" value="R=19-468"/>
</dbReference>
<dbReference type="PDBsum" id="2JOD"/>
<dbReference type="PDBsum" id="3N94"/>
<dbReference type="PDBsum" id="6LPB"/>
<dbReference type="PDBsum" id="6M1H"/>
<dbReference type="PDBsum" id="6M1I"/>
<dbReference type="PDBsum" id="6P9Y"/>
<dbReference type="PDBsum" id="7JQD"/>
<dbReference type="PDBsum" id="8E3X"/>
<dbReference type="EMDB" id="EMD-0940"/>
<dbReference type="EMDB" id="EMD-20278"/>
<dbReference type="EMDB" id="EMD-27872"/>
<dbReference type="EMDB" id="EMD-30047"/>
<dbReference type="EMDB" id="EMD-30048"/>
<dbReference type="SMR" id="P41586"/>
<dbReference type="BioGRID" id="106630">
    <property type="interactions" value="3"/>
</dbReference>
<dbReference type="CORUM" id="P41586"/>
<dbReference type="DIP" id="DIP-42467N"/>
<dbReference type="FunCoup" id="P41586">
    <property type="interactions" value="554"/>
</dbReference>
<dbReference type="IntAct" id="P41586">
    <property type="interactions" value="5"/>
</dbReference>
<dbReference type="MINT" id="P41586"/>
<dbReference type="STRING" id="9606.ENSP00000483721"/>
<dbReference type="BindingDB" id="P41586"/>
<dbReference type="ChEMBL" id="CHEMBL5399"/>
<dbReference type="GuidetoPHARMACOLOGY" id="370"/>
<dbReference type="TCDB" id="9.A.14.4.8">
    <property type="family name" value="the g-protein-coupled receptor (gpcr) family"/>
</dbReference>
<dbReference type="GlyCosmos" id="P41586">
    <property type="glycosylation" value="5 sites, No reported glycans"/>
</dbReference>
<dbReference type="GlyGen" id="P41586">
    <property type="glycosylation" value="6 sites, 1 N-linked glycan (1 site)"/>
</dbReference>
<dbReference type="iPTMnet" id="P41586"/>
<dbReference type="PhosphoSitePlus" id="P41586"/>
<dbReference type="BioMuta" id="ADCYAP1R1"/>
<dbReference type="DMDM" id="1171986"/>
<dbReference type="jPOST" id="P41586"/>
<dbReference type="MassIVE" id="P41586"/>
<dbReference type="PaxDb" id="9606-ENSP00000483721"/>
<dbReference type="PeptideAtlas" id="P41586"/>
<dbReference type="ProteomicsDB" id="55465">
    <molecule id="P41586-1"/>
</dbReference>
<dbReference type="ProteomicsDB" id="55466">
    <molecule id="P41586-2"/>
</dbReference>
<dbReference type="ProteomicsDB" id="55467">
    <molecule id="P41586-3"/>
</dbReference>
<dbReference type="ProteomicsDB" id="55468">
    <molecule id="P41586-4"/>
</dbReference>
<dbReference type="ProteomicsDB" id="55469">
    <molecule id="P41586-5"/>
</dbReference>
<dbReference type="ABCD" id="P41586">
    <property type="antibodies" value="41 sequenced antibodies"/>
</dbReference>
<dbReference type="Antibodypedia" id="4280">
    <property type="antibodies" value="314 antibodies from 32 providers"/>
</dbReference>
<dbReference type="DNASU" id="117"/>
<dbReference type="Ensembl" id="ENST00000304166.9">
    <molecule id="P41586-1"/>
    <property type="protein sequence ID" value="ENSP00000306620.4"/>
    <property type="gene ID" value="ENSG00000078549.16"/>
</dbReference>
<dbReference type="Ensembl" id="ENST00000396211.7">
    <molecule id="P41586-2"/>
    <property type="protein sequence ID" value="ENSP00000379514.2"/>
    <property type="gene ID" value="ENSG00000078549.16"/>
</dbReference>
<dbReference type="Ensembl" id="ENST00000409363.5">
    <molecule id="P41586-3"/>
    <property type="protein sequence ID" value="ENSP00000387335.1"/>
    <property type="gene ID" value="ENSG00000078549.16"/>
</dbReference>
<dbReference type="Ensembl" id="ENST00000705424.1">
    <molecule id="P41586-2"/>
    <property type="protein sequence ID" value="ENSP00000516125.1"/>
    <property type="gene ID" value="ENSG00000078549.16"/>
</dbReference>
<dbReference type="GeneID" id="117"/>
<dbReference type="KEGG" id="hsa:117"/>
<dbReference type="MANE-Select" id="ENST00000304166.9">
    <property type="protein sequence ID" value="ENSP00000306620.4"/>
    <property type="RefSeq nucleotide sequence ID" value="NM_001118.5"/>
    <property type="RefSeq protein sequence ID" value="NP_001109.2"/>
</dbReference>
<dbReference type="UCSC" id="uc003tca.3">
    <molecule id="P41586-1"/>
    <property type="organism name" value="human"/>
</dbReference>
<dbReference type="AGR" id="HGNC:242"/>
<dbReference type="CTD" id="117"/>
<dbReference type="DisGeNET" id="117"/>
<dbReference type="GeneCards" id="ADCYAP1R1"/>
<dbReference type="HGNC" id="HGNC:242">
    <property type="gene designation" value="ADCYAP1R1"/>
</dbReference>
<dbReference type="HPA" id="ENSG00000078549">
    <property type="expression patterns" value="Group enriched (brain, fallopian tube)"/>
</dbReference>
<dbReference type="MIM" id="102981">
    <property type="type" value="gene"/>
</dbReference>
<dbReference type="neXtProt" id="NX_P41586"/>
<dbReference type="OpenTargets" id="ENSG00000078549"/>
<dbReference type="PharmGKB" id="PA24565"/>
<dbReference type="VEuPathDB" id="HostDB:ENSG00000078549"/>
<dbReference type="eggNOG" id="KOG4564">
    <property type="taxonomic scope" value="Eukaryota"/>
</dbReference>
<dbReference type="GeneTree" id="ENSGT00940000157362"/>
<dbReference type="HOGENOM" id="CLU_002753_4_4_1"/>
<dbReference type="InParanoid" id="P41586"/>
<dbReference type="OrthoDB" id="5967113at2759"/>
<dbReference type="PAN-GO" id="P41586">
    <property type="GO annotations" value="5 GO annotations based on evolutionary models"/>
</dbReference>
<dbReference type="PhylomeDB" id="P41586"/>
<dbReference type="TreeFam" id="TF315710"/>
<dbReference type="PathwayCommons" id="P41586"/>
<dbReference type="Reactome" id="R-HSA-187024">
    <property type="pathway name" value="NGF-independant TRKA activation"/>
</dbReference>
<dbReference type="Reactome" id="R-HSA-418555">
    <property type="pathway name" value="G alpha (s) signalling events"/>
</dbReference>
<dbReference type="Reactome" id="R-HSA-420092">
    <property type="pathway name" value="Glucagon-type ligand receptors"/>
</dbReference>
<dbReference type="SignaLink" id="P41586"/>
<dbReference type="SIGNOR" id="P41586"/>
<dbReference type="BioGRID-ORCS" id="117">
    <property type="hits" value="12 hits in 1139 CRISPR screens"/>
</dbReference>
<dbReference type="ChiTaRS" id="ADCYAP1R1">
    <property type="organism name" value="human"/>
</dbReference>
<dbReference type="EvolutionaryTrace" id="P41586"/>
<dbReference type="GeneWiki" id="ADCYAP1R1"/>
<dbReference type="GenomeRNAi" id="117"/>
<dbReference type="Pharos" id="P41586">
    <property type="development level" value="Tchem"/>
</dbReference>
<dbReference type="PRO" id="PR:P41586"/>
<dbReference type="Proteomes" id="UP000005640">
    <property type="component" value="Chromosome 7"/>
</dbReference>
<dbReference type="RNAct" id="P41586">
    <property type="molecule type" value="protein"/>
</dbReference>
<dbReference type="Bgee" id="ENSG00000078549">
    <property type="expression patterns" value="Expressed in cortical plate and 128 other cell types or tissues"/>
</dbReference>
<dbReference type="ExpressionAtlas" id="P41586">
    <property type="expression patterns" value="baseline and differential"/>
</dbReference>
<dbReference type="GO" id="GO:0005923">
    <property type="term" value="C:bicellular tight junction"/>
    <property type="evidence" value="ECO:0007669"/>
    <property type="project" value="Ensembl"/>
</dbReference>
<dbReference type="GO" id="GO:0005901">
    <property type="term" value="C:caveola"/>
    <property type="evidence" value="ECO:0007669"/>
    <property type="project" value="Ensembl"/>
</dbReference>
<dbReference type="GO" id="GO:0009986">
    <property type="term" value="C:cell surface"/>
    <property type="evidence" value="ECO:0007669"/>
    <property type="project" value="Ensembl"/>
</dbReference>
<dbReference type="GO" id="GO:0005768">
    <property type="term" value="C:endosome"/>
    <property type="evidence" value="ECO:0007669"/>
    <property type="project" value="Ensembl"/>
</dbReference>
<dbReference type="GO" id="GO:0043231">
    <property type="term" value="C:intracellular membrane-bounded organelle"/>
    <property type="evidence" value="ECO:0000314"/>
    <property type="project" value="HPA"/>
</dbReference>
<dbReference type="GO" id="GO:0005886">
    <property type="term" value="C:plasma membrane"/>
    <property type="evidence" value="ECO:0000314"/>
    <property type="project" value="UniProt"/>
</dbReference>
<dbReference type="GO" id="GO:0043235">
    <property type="term" value="C:receptor complex"/>
    <property type="evidence" value="ECO:0000314"/>
    <property type="project" value="MGI"/>
</dbReference>
<dbReference type="GO" id="GO:0008179">
    <property type="term" value="F:adenylate cyclase binding"/>
    <property type="evidence" value="ECO:0007669"/>
    <property type="project" value="Ensembl"/>
</dbReference>
<dbReference type="GO" id="GO:0008528">
    <property type="term" value="F:G protein-coupled peptide receptor activity"/>
    <property type="evidence" value="ECO:0000318"/>
    <property type="project" value="GO_Central"/>
</dbReference>
<dbReference type="GO" id="GO:0042923">
    <property type="term" value="F:neuropeptide binding"/>
    <property type="evidence" value="ECO:0007669"/>
    <property type="project" value="Ensembl"/>
</dbReference>
<dbReference type="GO" id="GO:0017046">
    <property type="term" value="F:peptide hormone binding"/>
    <property type="evidence" value="ECO:0000318"/>
    <property type="project" value="GO_Central"/>
</dbReference>
<dbReference type="GO" id="GO:0001634">
    <property type="term" value="F:pituitary adenylate cyclase-activating polypeptide receptor activity"/>
    <property type="evidence" value="ECO:0000314"/>
    <property type="project" value="UniProtKB"/>
</dbReference>
<dbReference type="GO" id="GO:0038023">
    <property type="term" value="F:signaling receptor activity"/>
    <property type="evidence" value="ECO:0000304"/>
    <property type="project" value="ProtInc"/>
</dbReference>
<dbReference type="GO" id="GO:0031267">
    <property type="term" value="F:small GTPase binding"/>
    <property type="evidence" value="ECO:0007669"/>
    <property type="project" value="Ensembl"/>
</dbReference>
<dbReference type="GO" id="GO:0004999">
    <property type="term" value="F:vasoactive intestinal polypeptide receptor activity"/>
    <property type="evidence" value="ECO:0007669"/>
    <property type="project" value="InterPro"/>
</dbReference>
<dbReference type="GO" id="GO:0007189">
    <property type="term" value="P:adenylate cyclase-activating G protein-coupled receptor signaling pathway"/>
    <property type="evidence" value="ECO:0000314"/>
    <property type="project" value="UniProtKB"/>
</dbReference>
<dbReference type="GO" id="GO:0007188">
    <property type="term" value="P:adenylate cyclase-modulating G protein-coupled receptor signaling pathway"/>
    <property type="evidence" value="ECO:0000318"/>
    <property type="project" value="GO_Central"/>
</dbReference>
<dbReference type="GO" id="GO:0141156">
    <property type="term" value="P:cAMP/PKA signal transduction"/>
    <property type="evidence" value="ECO:0007669"/>
    <property type="project" value="Ensembl"/>
</dbReference>
<dbReference type="GO" id="GO:0030154">
    <property type="term" value="P:cell differentiation"/>
    <property type="evidence" value="ECO:0007669"/>
    <property type="project" value="UniProtKB-KW"/>
</dbReference>
<dbReference type="GO" id="GO:0007166">
    <property type="term" value="P:cell surface receptor signaling pathway"/>
    <property type="evidence" value="ECO:0000304"/>
    <property type="project" value="ProtInc"/>
</dbReference>
<dbReference type="GO" id="GO:0046545">
    <property type="term" value="P:development of primary female sexual characteristics"/>
    <property type="evidence" value="ECO:0007669"/>
    <property type="project" value="Ensembl"/>
</dbReference>
<dbReference type="GO" id="GO:0033555">
    <property type="term" value="P:multicellular organismal response to stress"/>
    <property type="evidence" value="ECO:0007669"/>
    <property type="project" value="Ensembl"/>
</dbReference>
<dbReference type="GO" id="GO:1901032">
    <property type="term" value="P:negative regulation of response to reactive oxygen species"/>
    <property type="evidence" value="ECO:0007669"/>
    <property type="project" value="Ensembl"/>
</dbReference>
<dbReference type="GO" id="GO:0010524">
    <property type="term" value="P:positive regulation of calcium ion transport into cytosol"/>
    <property type="evidence" value="ECO:0007669"/>
    <property type="project" value="Ensembl"/>
</dbReference>
<dbReference type="GO" id="GO:0141163">
    <property type="term" value="P:positive regulation of cAMP/PKA signal transduction"/>
    <property type="evidence" value="ECO:0007669"/>
    <property type="project" value="Ensembl"/>
</dbReference>
<dbReference type="GO" id="GO:0060732">
    <property type="term" value="P:positive regulation of inositol phosphate biosynthetic process"/>
    <property type="evidence" value="ECO:0007669"/>
    <property type="project" value="Ensembl"/>
</dbReference>
<dbReference type="GO" id="GO:0051057">
    <property type="term" value="P:positive regulation of small GTPase mediated signal transduction"/>
    <property type="evidence" value="ECO:0007669"/>
    <property type="project" value="Ensembl"/>
</dbReference>
<dbReference type="GO" id="GO:0032355">
    <property type="term" value="P:response to estradiol"/>
    <property type="evidence" value="ECO:0007669"/>
    <property type="project" value="Ensembl"/>
</dbReference>
<dbReference type="GO" id="GO:0045471">
    <property type="term" value="P:response to ethanol"/>
    <property type="evidence" value="ECO:0007669"/>
    <property type="project" value="Ensembl"/>
</dbReference>
<dbReference type="GO" id="GO:0009410">
    <property type="term" value="P:response to xenobiotic stimulus"/>
    <property type="evidence" value="ECO:0007669"/>
    <property type="project" value="Ensembl"/>
</dbReference>
<dbReference type="GO" id="GO:0007283">
    <property type="term" value="P:spermatogenesis"/>
    <property type="evidence" value="ECO:0007669"/>
    <property type="project" value="UniProtKB-KW"/>
</dbReference>
<dbReference type="CDD" id="cd15987">
    <property type="entry name" value="7tmB1_PACAP-R1"/>
    <property type="match status" value="1"/>
</dbReference>
<dbReference type="FunFam" id="1.20.1070.10:FF:000022">
    <property type="entry name" value="Pituitary adenylate cyclase-activating polypeptide type I receptor"/>
    <property type="match status" value="1"/>
</dbReference>
<dbReference type="FunFam" id="4.10.1240.10:FF:000008">
    <property type="entry name" value="pituitary adenylate cyclase-activating polypeptide type I receptor"/>
    <property type="match status" value="1"/>
</dbReference>
<dbReference type="Gene3D" id="4.10.1240.10">
    <property type="entry name" value="GPCR, family 2, extracellular hormone receptor domain"/>
    <property type="match status" value="1"/>
</dbReference>
<dbReference type="Gene3D" id="1.20.1070.10">
    <property type="entry name" value="Rhodopsin 7-helix transmembrane proteins"/>
    <property type="match status" value="1"/>
</dbReference>
<dbReference type="InterPro" id="IPR050332">
    <property type="entry name" value="GPCR_2"/>
</dbReference>
<dbReference type="InterPro" id="IPR017981">
    <property type="entry name" value="GPCR_2-like_7TM"/>
</dbReference>
<dbReference type="InterPro" id="IPR036445">
    <property type="entry name" value="GPCR_2_extracell_dom_sf"/>
</dbReference>
<dbReference type="InterPro" id="IPR001879">
    <property type="entry name" value="GPCR_2_extracellular_dom"/>
</dbReference>
<dbReference type="InterPro" id="IPR002285">
    <property type="entry name" value="GPCR_2_PACAP_1_rcpt"/>
</dbReference>
<dbReference type="InterPro" id="IPR000832">
    <property type="entry name" value="GPCR_2_secretin-like"/>
</dbReference>
<dbReference type="InterPro" id="IPR017983">
    <property type="entry name" value="GPCR_2_secretin-like_CS"/>
</dbReference>
<dbReference type="PANTHER" id="PTHR45620">
    <property type="entry name" value="PDF RECEPTOR-LIKE PROTEIN-RELATED"/>
    <property type="match status" value="1"/>
</dbReference>
<dbReference type="PANTHER" id="PTHR45620:SF12">
    <property type="entry name" value="PITUITARY ADENYLATE CYCLASE-ACTIVATING POLYPEPTIDE TYPE I RECEPTOR"/>
    <property type="match status" value="1"/>
</dbReference>
<dbReference type="Pfam" id="PF00002">
    <property type="entry name" value="7tm_2"/>
    <property type="match status" value="1"/>
</dbReference>
<dbReference type="Pfam" id="PF02793">
    <property type="entry name" value="HRM"/>
    <property type="match status" value="1"/>
</dbReference>
<dbReference type="PRINTS" id="PR00249">
    <property type="entry name" value="GPCRSECRETIN"/>
</dbReference>
<dbReference type="PRINTS" id="PR01156">
    <property type="entry name" value="PACAPRECEPTR"/>
</dbReference>
<dbReference type="SMART" id="SM00008">
    <property type="entry name" value="HormR"/>
    <property type="match status" value="1"/>
</dbReference>
<dbReference type="SUPFAM" id="SSF81321">
    <property type="entry name" value="Family A G protein-coupled receptor-like"/>
    <property type="match status" value="1"/>
</dbReference>
<dbReference type="SUPFAM" id="SSF111418">
    <property type="entry name" value="Hormone receptor domain"/>
    <property type="match status" value="1"/>
</dbReference>
<dbReference type="PROSITE" id="PS00649">
    <property type="entry name" value="G_PROTEIN_RECEP_F2_1"/>
    <property type="match status" value="1"/>
</dbReference>
<dbReference type="PROSITE" id="PS00650">
    <property type="entry name" value="G_PROTEIN_RECEP_F2_2"/>
    <property type="match status" value="1"/>
</dbReference>
<dbReference type="PROSITE" id="PS50227">
    <property type="entry name" value="G_PROTEIN_RECEP_F2_3"/>
    <property type="match status" value="1"/>
</dbReference>
<dbReference type="PROSITE" id="PS50261">
    <property type="entry name" value="G_PROTEIN_RECEP_F2_4"/>
    <property type="match status" value="1"/>
</dbReference>
<accession>P41586</accession>
<accession>A8K1Y1</accession>
<accession>B7ZLA7</accession>
<accession>B8ZZK3</accession>
<accession>Q17S10</accession>
<name>PACR_HUMAN</name>